<organism>
    <name type="scientific">Drosophila melanogaster</name>
    <name type="common">Fruit fly</name>
    <dbReference type="NCBI Taxonomy" id="7227"/>
    <lineage>
        <taxon>Eukaryota</taxon>
        <taxon>Metazoa</taxon>
        <taxon>Ecdysozoa</taxon>
        <taxon>Arthropoda</taxon>
        <taxon>Hexapoda</taxon>
        <taxon>Insecta</taxon>
        <taxon>Pterygota</taxon>
        <taxon>Neoptera</taxon>
        <taxon>Endopterygota</taxon>
        <taxon>Diptera</taxon>
        <taxon>Brachycera</taxon>
        <taxon>Muscomorpha</taxon>
        <taxon>Ephydroidea</taxon>
        <taxon>Drosophilidae</taxon>
        <taxon>Drosophila</taxon>
        <taxon>Sophophora</taxon>
    </lineage>
</organism>
<sequence>MQLLLSSVCMALTSAVIGFAYYQKQQFYPAVVYITKSNASMGVIYIQFFVIVFMFGKLLSKIFLGTLRAAEFEHLLERFWYALTETCLAFTVFRDDFNPRFVALFTVLLFLKSFHWLAEERVDFMERSPVLGWLFHIRVGSLLTVLGILDYVLLIHAYNSTLVRGPTVQLVFGFEYAILLTVIASTAIKYVLHAAEMRTDTPWENKAVFLLYTELVIGLIKVVLYILFVVIMAKIYALPMFVFRPMFFTIRNFRKALNDVIMSRRAIRNMNTLYPDATPEELRQSDNICIICREDMVNHSKKLPCGHIFHTTCLRSWFQRQQTCPTCRLNILRTPTVNSTAMPRQGDEAVAAAAGNPIPAAAGVQPAGGVPPPAPTAVVDGNQARADVNVAGGQALPPNFADLFGDASGLPNGLPNLAGLQIPPPPVMPMISPFMIPPHFGYLTPLPPPPIPQDLTNFTDEELRAMEGLQRDHIVQRLKLLQNINLMLDSAGIMMSQYQSLSARLQLTAVTPATAVNGSADSSVYDMPSTSATAMAQLETHQVTPTAAASSASPTMPAEKVTIEDLGADADEDDIPSTATEAVSIPNSDADFEENSSELGELRKRRLKFLEERNKSAATNERTTAE</sequence>
<proteinExistence type="evidence at protein level"/>
<evidence type="ECO:0000250" key="1"/>
<evidence type="ECO:0000255" key="2"/>
<evidence type="ECO:0000255" key="3">
    <source>
        <dbReference type="PROSITE-ProRule" id="PRU00175"/>
    </source>
</evidence>
<evidence type="ECO:0000256" key="4">
    <source>
        <dbReference type="SAM" id="MobiDB-lite"/>
    </source>
</evidence>
<evidence type="ECO:0000269" key="5">
    <source>
    </source>
</evidence>
<evidence type="ECO:0000305" key="6"/>
<protein>
    <recommendedName>
        <fullName>E3 ubiquitin-protein ligase HRD1</fullName>
        <ecNumber>2.3.2.27</ecNumber>
    </recommendedName>
    <alternativeName>
        <fullName evidence="6">RING-type E3 ubiquitin transferase HRD1</fullName>
    </alternativeName>
    <alternativeName>
        <fullName>Septin-interacting protein 3</fullName>
    </alternativeName>
    <alternativeName>
        <fullName>Synoviolin</fullName>
    </alternativeName>
</protein>
<keyword id="KW-0256">Endoplasmic reticulum</keyword>
<keyword id="KW-0472">Membrane</keyword>
<keyword id="KW-0479">Metal-binding</keyword>
<keyword id="KW-1185">Reference proteome</keyword>
<keyword id="KW-0732">Signal</keyword>
<keyword id="KW-0808">Transferase</keyword>
<keyword id="KW-0812">Transmembrane</keyword>
<keyword id="KW-1133">Transmembrane helix</keyword>
<keyword id="KW-0833">Ubl conjugation pathway</keyword>
<keyword id="KW-0862">Zinc</keyword>
<keyword id="KW-0863">Zinc-finger</keyword>
<feature type="signal peptide" evidence="2">
    <location>
        <begin position="1"/>
        <end position="15"/>
    </location>
</feature>
<feature type="chain" id="PRO_0000280554" description="E3 ubiquitin-protein ligase HRD1">
    <location>
        <begin position="16"/>
        <end position="626"/>
    </location>
</feature>
<feature type="topological domain" description="Lumenal" evidence="2">
    <location>
        <begin position="16"/>
        <end position="38"/>
    </location>
</feature>
<feature type="transmembrane region" description="Helical" evidence="2">
    <location>
        <begin position="39"/>
        <end position="59"/>
    </location>
</feature>
<feature type="topological domain" description="Cytoplasmic" evidence="2">
    <location>
        <begin position="60"/>
        <end position="96"/>
    </location>
</feature>
<feature type="transmembrane region" description="Helical" evidence="2">
    <location>
        <begin position="97"/>
        <end position="117"/>
    </location>
</feature>
<feature type="topological domain" description="Lumenal" evidence="2">
    <location>
        <begin position="118"/>
        <end position="128"/>
    </location>
</feature>
<feature type="transmembrane region" description="Helical" evidence="2">
    <location>
        <begin position="129"/>
        <end position="149"/>
    </location>
</feature>
<feature type="topological domain" description="Cytoplasmic" evidence="2">
    <location>
        <begin position="150"/>
        <end position="167"/>
    </location>
</feature>
<feature type="transmembrane region" description="Helical" evidence="2">
    <location>
        <begin position="168"/>
        <end position="188"/>
    </location>
</feature>
<feature type="topological domain" description="Lumenal" evidence="2">
    <location>
        <begin position="189"/>
        <end position="222"/>
    </location>
</feature>
<feature type="transmembrane region" description="Helical" evidence="2">
    <location>
        <begin position="223"/>
        <end position="243"/>
    </location>
</feature>
<feature type="topological domain" description="Cytoplasmic" evidence="2">
    <location>
        <begin position="244"/>
        <end position="626"/>
    </location>
</feature>
<feature type="zinc finger region" description="RING-type; atypical" evidence="3">
    <location>
        <begin position="289"/>
        <end position="328"/>
    </location>
</feature>
<feature type="region of interest" description="Interaction with p53/TP53" evidence="1">
    <location>
        <begin position="234"/>
        <end position="268"/>
    </location>
</feature>
<feature type="region of interest" description="Disordered" evidence="4">
    <location>
        <begin position="569"/>
        <end position="600"/>
    </location>
</feature>
<feature type="compositionally biased region" description="Polar residues" evidence="4">
    <location>
        <begin position="577"/>
        <end position="587"/>
    </location>
</feature>
<comment type="function">
    <text evidence="5">Acts as an E3 ubiquitin-protein ligase which accepts ubiquitin specifically from endoplasmic reticulum-associated UBC7 E2 ligase and transfers it to substrates, promoting their degradation. Component of the endoplasmic reticulum quality control (ERQC) system also called ER-associated degradation (ERAD) involved in ubiquitin-dependent degradation of misfolded endoplasmic reticulum proteins. Also promotes the degradation of normal but naturally short-lived proteins. Protects cells from ER stress-induced apoptosis. Sequesters p53 in the cytoplasm and promotes its degradation, thereby negatively regulating its biological function in transcription, cell cycle regulation and apoptosis.</text>
</comment>
<comment type="catalytic activity">
    <reaction>
        <text>S-ubiquitinyl-[E2 ubiquitin-conjugating enzyme]-L-cysteine + [acceptor protein]-L-lysine = [E2 ubiquitin-conjugating enzyme]-L-cysteine + N(6)-ubiquitinyl-[acceptor protein]-L-lysine.</text>
        <dbReference type="EC" id="2.3.2.27"/>
    </reaction>
</comment>
<comment type="pathway">
    <text>Protein modification; protein ubiquitination.</text>
</comment>
<comment type="subunit">
    <text evidence="1 5">Homodimer (By similarity). Interacts with p53. May interact with Septin2.</text>
</comment>
<comment type="subcellular location">
    <subcellularLocation>
        <location evidence="1">Endoplasmic reticulum membrane</location>
        <topology evidence="1">Multi-pass membrane protein</topology>
    </subcellularLocation>
</comment>
<comment type="domain">
    <text evidence="1">The RING-type zinc finger is required for E3 ligase activity.</text>
</comment>
<comment type="similarity">
    <text evidence="6">Belongs to the HRD1 family.</text>
</comment>
<name>HRD1_DROME</name>
<gene>
    <name type="primary">sip3</name>
    <name type="synonym">Syno</name>
    <name type="ORF">CG1937</name>
</gene>
<accession>Q95SP2</accession>
<accession>Q9V9T8</accession>
<dbReference type="EC" id="2.3.2.27"/>
<dbReference type="EMBL" id="AE014297">
    <property type="protein sequence ID" value="AAF57196.2"/>
    <property type="molecule type" value="Genomic_DNA"/>
</dbReference>
<dbReference type="EMBL" id="AY060677">
    <property type="protein sequence ID" value="AAL28225.1"/>
    <property type="molecule type" value="mRNA"/>
</dbReference>
<dbReference type="RefSeq" id="NP_001263152.1">
    <property type="nucleotide sequence ID" value="NM_001276223.2"/>
</dbReference>
<dbReference type="RefSeq" id="NP_651894.3">
    <property type="nucleotide sequence ID" value="NM_143637.5"/>
</dbReference>
<dbReference type="SMR" id="Q95SP2"/>
<dbReference type="BioGRID" id="68588">
    <property type="interactions" value="10"/>
</dbReference>
<dbReference type="FunCoup" id="Q95SP2">
    <property type="interactions" value="1797"/>
</dbReference>
<dbReference type="IntAct" id="Q95SP2">
    <property type="interactions" value="3"/>
</dbReference>
<dbReference type="STRING" id="7227.FBpp0303146"/>
<dbReference type="GlyGen" id="Q95SP2">
    <property type="glycosylation" value="4 sites"/>
</dbReference>
<dbReference type="PaxDb" id="7227-FBpp0303146"/>
<dbReference type="DNASU" id="43747"/>
<dbReference type="EnsemblMetazoa" id="FBtr0085842">
    <property type="protein sequence ID" value="FBpp0085201"/>
    <property type="gene ID" value="FBgn0039875"/>
</dbReference>
<dbReference type="EnsemblMetazoa" id="FBtr0330113">
    <property type="protein sequence ID" value="FBpp0303146"/>
    <property type="gene ID" value="FBgn0039875"/>
</dbReference>
<dbReference type="GeneID" id="43747"/>
<dbReference type="KEGG" id="dme:Dmel_CG1937"/>
<dbReference type="AGR" id="FB:FBgn0039875"/>
<dbReference type="CTD" id="43747"/>
<dbReference type="FlyBase" id="FBgn0039875">
    <property type="gene designation" value="sip3"/>
</dbReference>
<dbReference type="VEuPathDB" id="VectorBase:FBgn0039875"/>
<dbReference type="eggNOG" id="KOG0802">
    <property type="taxonomic scope" value="Eukaryota"/>
</dbReference>
<dbReference type="GeneTree" id="ENSGT00940000172216"/>
<dbReference type="HOGENOM" id="CLU_009169_3_1_1"/>
<dbReference type="InParanoid" id="Q95SP2"/>
<dbReference type="OMA" id="MQQYQGI"/>
<dbReference type="OrthoDB" id="7759664at2759"/>
<dbReference type="PhylomeDB" id="Q95SP2"/>
<dbReference type="Reactome" id="R-DME-5358346">
    <property type="pathway name" value="Hedgehog ligand biogenesis"/>
</dbReference>
<dbReference type="SignaLink" id="Q95SP2"/>
<dbReference type="UniPathway" id="UPA00143"/>
<dbReference type="BioGRID-ORCS" id="43747">
    <property type="hits" value="0 hits in 1 CRISPR screen"/>
</dbReference>
<dbReference type="ChiTaRS" id="sip3">
    <property type="organism name" value="fly"/>
</dbReference>
<dbReference type="GenomeRNAi" id="43747"/>
<dbReference type="PRO" id="PR:Q95SP2"/>
<dbReference type="Proteomes" id="UP000000803">
    <property type="component" value="Chromosome 3R"/>
</dbReference>
<dbReference type="Bgee" id="FBgn0039875">
    <property type="expression patterns" value="Expressed in adult differentiating enterocyte in digestive tract and 152 other cell types or tissues"/>
</dbReference>
<dbReference type="ExpressionAtlas" id="Q95SP2">
    <property type="expression patterns" value="baseline and differential"/>
</dbReference>
<dbReference type="GO" id="GO:0012505">
    <property type="term" value="C:endomembrane system"/>
    <property type="evidence" value="ECO:0000318"/>
    <property type="project" value="GO_Central"/>
</dbReference>
<dbReference type="GO" id="GO:0005783">
    <property type="term" value="C:endoplasmic reticulum"/>
    <property type="evidence" value="ECO:0000250"/>
    <property type="project" value="UniProtKB"/>
</dbReference>
<dbReference type="GO" id="GO:0005789">
    <property type="term" value="C:endoplasmic reticulum membrane"/>
    <property type="evidence" value="ECO:0007669"/>
    <property type="project" value="UniProtKB-SubCell"/>
</dbReference>
<dbReference type="GO" id="GO:0044322">
    <property type="term" value="C:endoplasmic reticulum quality control compartment"/>
    <property type="evidence" value="ECO:0000318"/>
    <property type="project" value="GO_Central"/>
</dbReference>
<dbReference type="GO" id="GO:0016020">
    <property type="term" value="C:membrane"/>
    <property type="evidence" value="ECO:0000255"/>
    <property type="project" value="FlyBase"/>
</dbReference>
<dbReference type="GO" id="GO:0002039">
    <property type="term" value="F:p53 binding"/>
    <property type="evidence" value="ECO:0000353"/>
    <property type="project" value="FlyBase"/>
</dbReference>
<dbReference type="GO" id="GO:0061630">
    <property type="term" value="F:ubiquitin protein ligase activity"/>
    <property type="evidence" value="ECO:0000314"/>
    <property type="project" value="FlyBase"/>
</dbReference>
<dbReference type="GO" id="GO:0008270">
    <property type="term" value="F:zinc ion binding"/>
    <property type="evidence" value="ECO:0000255"/>
    <property type="project" value="FlyBase"/>
</dbReference>
<dbReference type="GO" id="GO:0030968">
    <property type="term" value="P:endoplasmic reticulum unfolded protein response"/>
    <property type="evidence" value="ECO:0000316"/>
    <property type="project" value="FlyBase"/>
</dbReference>
<dbReference type="GO" id="GO:0036503">
    <property type="term" value="P:ERAD pathway"/>
    <property type="evidence" value="ECO:0000250"/>
    <property type="project" value="UniProtKB"/>
</dbReference>
<dbReference type="GO" id="GO:0036335">
    <property type="term" value="P:intestinal stem cell homeostasis"/>
    <property type="evidence" value="ECO:0000315"/>
    <property type="project" value="FlyBase"/>
</dbReference>
<dbReference type="GO" id="GO:2000060">
    <property type="term" value="P:positive regulation of ubiquitin-dependent protein catabolic process"/>
    <property type="evidence" value="ECO:0000316"/>
    <property type="project" value="FlyBase"/>
</dbReference>
<dbReference type="GO" id="GO:0043161">
    <property type="term" value="P:proteasome-mediated ubiquitin-dependent protein catabolic process"/>
    <property type="evidence" value="ECO:0000318"/>
    <property type="project" value="GO_Central"/>
</dbReference>
<dbReference type="GO" id="GO:0016567">
    <property type="term" value="P:protein ubiquitination"/>
    <property type="evidence" value="ECO:0000314"/>
    <property type="project" value="FlyBase"/>
</dbReference>
<dbReference type="GO" id="GO:0036490">
    <property type="term" value="P:regulation of translation in response to endoplasmic reticulum stress"/>
    <property type="evidence" value="ECO:0000315"/>
    <property type="project" value="FlyBase"/>
</dbReference>
<dbReference type="GO" id="GO:0034976">
    <property type="term" value="P:response to endoplasmic reticulum stress"/>
    <property type="evidence" value="ECO:0000315"/>
    <property type="project" value="FlyBase"/>
</dbReference>
<dbReference type="CDD" id="cd16479">
    <property type="entry name" value="RING-H2_synoviolin"/>
    <property type="match status" value="1"/>
</dbReference>
<dbReference type="FunFam" id="3.30.40.10:FF:000088">
    <property type="entry name" value="E3 ubiquitin-protein ligase synoviolin"/>
    <property type="match status" value="1"/>
</dbReference>
<dbReference type="Gene3D" id="3.30.40.10">
    <property type="entry name" value="Zinc/RING finger domain, C3HC4 (zinc finger)"/>
    <property type="match status" value="1"/>
</dbReference>
<dbReference type="InterPro" id="IPR050731">
    <property type="entry name" value="HRD1_E3_ubiq-ligases"/>
</dbReference>
<dbReference type="InterPro" id="IPR001841">
    <property type="entry name" value="Znf_RING"/>
</dbReference>
<dbReference type="InterPro" id="IPR013083">
    <property type="entry name" value="Znf_RING/FYVE/PHD"/>
</dbReference>
<dbReference type="PANTHER" id="PTHR22763:SF184">
    <property type="entry name" value="E3 UBIQUITIN-PROTEIN LIGASE SYNOVIOLIN"/>
    <property type="match status" value="1"/>
</dbReference>
<dbReference type="PANTHER" id="PTHR22763">
    <property type="entry name" value="RING ZINC FINGER PROTEIN"/>
    <property type="match status" value="1"/>
</dbReference>
<dbReference type="Pfam" id="PF13639">
    <property type="entry name" value="zf-RING_2"/>
    <property type="match status" value="1"/>
</dbReference>
<dbReference type="SMART" id="SM00184">
    <property type="entry name" value="RING"/>
    <property type="match status" value="1"/>
</dbReference>
<dbReference type="SUPFAM" id="SSF57850">
    <property type="entry name" value="RING/U-box"/>
    <property type="match status" value="1"/>
</dbReference>
<dbReference type="PROSITE" id="PS50089">
    <property type="entry name" value="ZF_RING_2"/>
    <property type="match status" value="1"/>
</dbReference>
<reference key="1">
    <citation type="journal article" date="2000" name="Science">
        <title>The genome sequence of Drosophila melanogaster.</title>
        <authorList>
            <person name="Adams M.D."/>
            <person name="Celniker S.E."/>
            <person name="Holt R.A."/>
            <person name="Evans C.A."/>
            <person name="Gocayne J.D."/>
            <person name="Amanatides P.G."/>
            <person name="Scherer S.E."/>
            <person name="Li P.W."/>
            <person name="Hoskins R.A."/>
            <person name="Galle R.F."/>
            <person name="George R.A."/>
            <person name="Lewis S.E."/>
            <person name="Richards S."/>
            <person name="Ashburner M."/>
            <person name="Henderson S.N."/>
            <person name="Sutton G.G."/>
            <person name="Wortman J.R."/>
            <person name="Yandell M.D."/>
            <person name="Zhang Q."/>
            <person name="Chen L.X."/>
            <person name="Brandon R.C."/>
            <person name="Rogers Y.-H.C."/>
            <person name="Blazej R.G."/>
            <person name="Champe M."/>
            <person name="Pfeiffer B.D."/>
            <person name="Wan K.H."/>
            <person name="Doyle C."/>
            <person name="Baxter E.G."/>
            <person name="Helt G."/>
            <person name="Nelson C.R."/>
            <person name="Miklos G.L.G."/>
            <person name="Abril J.F."/>
            <person name="Agbayani A."/>
            <person name="An H.-J."/>
            <person name="Andrews-Pfannkoch C."/>
            <person name="Baldwin D."/>
            <person name="Ballew R.M."/>
            <person name="Basu A."/>
            <person name="Baxendale J."/>
            <person name="Bayraktaroglu L."/>
            <person name="Beasley E.M."/>
            <person name="Beeson K.Y."/>
            <person name="Benos P.V."/>
            <person name="Berman B.P."/>
            <person name="Bhandari D."/>
            <person name="Bolshakov S."/>
            <person name="Borkova D."/>
            <person name="Botchan M.R."/>
            <person name="Bouck J."/>
            <person name="Brokstein P."/>
            <person name="Brottier P."/>
            <person name="Burtis K.C."/>
            <person name="Busam D.A."/>
            <person name="Butler H."/>
            <person name="Cadieu E."/>
            <person name="Center A."/>
            <person name="Chandra I."/>
            <person name="Cherry J.M."/>
            <person name="Cawley S."/>
            <person name="Dahlke C."/>
            <person name="Davenport L.B."/>
            <person name="Davies P."/>
            <person name="de Pablos B."/>
            <person name="Delcher A."/>
            <person name="Deng Z."/>
            <person name="Mays A.D."/>
            <person name="Dew I."/>
            <person name="Dietz S.M."/>
            <person name="Dodson K."/>
            <person name="Doup L.E."/>
            <person name="Downes M."/>
            <person name="Dugan-Rocha S."/>
            <person name="Dunkov B.C."/>
            <person name="Dunn P."/>
            <person name="Durbin K.J."/>
            <person name="Evangelista C.C."/>
            <person name="Ferraz C."/>
            <person name="Ferriera S."/>
            <person name="Fleischmann W."/>
            <person name="Fosler C."/>
            <person name="Gabrielian A.E."/>
            <person name="Garg N.S."/>
            <person name="Gelbart W.M."/>
            <person name="Glasser K."/>
            <person name="Glodek A."/>
            <person name="Gong F."/>
            <person name="Gorrell J.H."/>
            <person name="Gu Z."/>
            <person name="Guan P."/>
            <person name="Harris M."/>
            <person name="Harris N.L."/>
            <person name="Harvey D.A."/>
            <person name="Heiman T.J."/>
            <person name="Hernandez J.R."/>
            <person name="Houck J."/>
            <person name="Hostin D."/>
            <person name="Houston K.A."/>
            <person name="Howland T.J."/>
            <person name="Wei M.-H."/>
            <person name="Ibegwam C."/>
            <person name="Jalali M."/>
            <person name="Kalush F."/>
            <person name="Karpen G.H."/>
            <person name="Ke Z."/>
            <person name="Kennison J.A."/>
            <person name="Ketchum K.A."/>
            <person name="Kimmel B.E."/>
            <person name="Kodira C.D."/>
            <person name="Kraft C.L."/>
            <person name="Kravitz S."/>
            <person name="Kulp D."/>
            <person name="Lai Z."/>
            <person name="Lasko P."/>
            <person name="Lei Y."/>
            <person name="Levitsky A.A."/>
            <person name="Li J.H."/>
            <person name="Li Z."/>
            <person name="Liang Y."/>
            <person name="Lin X."/>
            <person name="Liu X."/>
            <person name="Mattei B."/>
            <person name="McIntosh T.C."/>
            <person name="McLeod M.P."/>
            <person name="McPherson D."/>
            <person name="Merkulov G."/>
            <person name="Milshina N.V."/>
            <person name="Mobarry C."/>
            <person name="Morris J."/>
            <person name="Moshrefi A."/>
            <person name="Mount S.M."/>
            <person name="Moy M."/>
            <person name="Murphy B."/>
            <person name="Murphy L."/>
            <person name="Muzny D.M."/>
            <person name="Nelson D.L."/>
            <person name="Nelson D.R."/>
            <person name="Nelson K.A."/>
            <person name="Nixon K."/>
            <person name="Nusskern D.R."/>
            <person name="Pacleb J.M."/>
            <person name="Palazzolo M."/>
            <person name="Pittman G.S."/>
            <person name="Pan S."/>
            <person name="Pollard J."/>
            <person name="Puri V."/>
            <person name="Reese M.G."/>
            <person name="Reinert K."/>
            <person name="Remington K."/>
            <person name="Saunders R.D.C."/>
            <person name="Scheeler F."/>
            <person name="Shen H."/>
            <person name="Shue B.C."/>
            <person name="Siden-Kiamos I."/>
            <person name="Simpson M."/>
            <person name="Skupski M.P."/>
            <person name="Smith T.J."/>
            <person name="Spier E."/>
            <person name="Spradling A.C."/>
            <person name="Stapleton M."/>
            <person name="Strong R."/>
            <person name="Sun E."/>
            <person name="Svirskas R."/>
            <person name="Tector C."/>
            <person name="Turner R."/>
            <person name="Venter E."/>
            <person name="Wang A.H."/>
            <person name="Wang X."/>
            <person name="Wang Z.-Y."/>
            <person name="Wassarman D.A."/>
            <person name="Weinstock G.M."/>
            <person name="Weissenbach J."/>
            <person name="Williams S.M."/>
            <person name="Woodage T."/>
            <person name="Worley K.C."/>
            <person name="Wu D."/>
            <person name="Yang S."/>
            <person name="Yao Q.A."/>
            <person name="Ye J."/>
            <person name="Yeh R.-F."/>
            <person name="Zaveri J.S."/>
            <person name="Zhan M."/>
            <person name="Zhang G."/>
            <person name="Zhao Q."/>
            <person name="Zheng L."/>
            <person name="Zheng X.H."/>
            <person name="Zhong F.N."/>
            <person name="Zhong W."/>
            <person name="Zhou X."/>
            <person name="Zhu S.C."/>
            <person name="Zhu X."/>
            <person name="Smith H.O."/>
            <person name="Gibbs R.A."/>
            <person name="Myers E.W."/>
            <person name="Rubin G.M."/>
            <person name="Venter J.C."/>
        </authorList>
    </citation>
    <scope>NUCLEOTIDE SEQUENCE [LARGE SCALE GENOMIC DNA]</scope>
    <source>
        <strain>Berkeley</strain>
    </source>
</reference>
<reference key="2">
    <citation type="journal article" date="2002" name="Genome Biol.">
        <title>Annotation of the Drosophila melanogaster euchromatic genome: a systematic review.</title>
        <authorList>
            <person name="Misra S."/>
            <person name="Crosby M.A."/>
            <person name="Mungall C.J."/>
            <person name="Matthews B.B."/>
            <person name="Campbell K.S."/>
            <person name="Hradecky P."/>
            <person name="Huang Y."/>
            <person name="Kaminker J.S."/>
            <person name="Millburn G.H."/>
            <person name="Prochnik S.E."/>
            <person name="Smith C.D."/>
            <person name="Tupy J.L."/>
            <person name="Whitfield E.J."/>
            <person name="Bayraktaroglu L."/>
            <person name="Berman B.P."/>
            <person name="Bettencourt B.R."/>
            <person name="Celniker S.E."/>
            <person name="de Grey A.D.N.J."/>
            <person name="Drysdale R.A."/>
            <person name="Harris N.L."/>
            <person name="Richter J."/>
            <person name="Russo S."/>
            <person name="Schroeder A.J."/>
            <person name="Shu S.Q."/>
            <person name="Stapleton M."/>
            <person name="Yamada C."/>
            <person name="Ashburner M."/>
            <person name="Gelbart W.M."/>
            <person name="Rubin G.M."/>
            <person name="Lewis S.E."/>
        </authorList>
    </citation>
    <scope>GENOME REANNOTATION</scope>
    <source>
        <strain>Berkeley</strain>
    </source>
</reference>
<reference key="3">
    <citation type="journal article" date="2002" name="Genome Biol.">
        <title>A Drosophila full-length cDNA resource.</title>
        <authorList>
            <person name="Stapleton M."/>
            <person name="Carlson J.W."/>
            <person name="Brokstein P."/>
            <person name="Yu C."/>
            <person name="Champe M."/>
            <person name="George R.A."/>
            <person name="Guarin H."/>
            <person name="Kronmiller B."/>
            <person name="Pacleb J.M."/>
            <person name="Park S."/>
            <person name="Wan K.H."/>
            <person name="Rubin G.M."/>
            <person name="Celniker S.E."/>
        </authorList>
    </citation>
    <scope>NUCLEOTIDE SEQUENCE [LARGE SCALE MRNA]</scope>
    <source>
        <strain>Berkeley</strain>
        <tissue>Head</tissue>
    </source>
</reference>
<reference key="4">
    <citation type="journal article" date="2002" name="J. Cell Sci.">
        <title>Identification of septin-interacting proteins and characterization of the Smt3/SUMO-conjugation system in Drosophila.</title>
        <authorList>
            <person name="Shih H.-P."/>
            <person name="Hales K.G."/>
            <person name="Pringle J.R."/>
            <person name="Peifer M."/>
        </authorList>
    </citation>
    <scope>POSSIBLE INTERACTION WITH SEPTIN2</scope>
</reference>
<reference key="5">
    <citation type="journal article" date="2007" name="EMBO J.">
        <title>Cytoplasmic destruction of p53 by the endoplasmic reticulum-resident ubiquitin ligase 'Synoviolin'.</title>
        <authorList>
            <person name="Yamasaki S."/>
            <person name="Yagishita N."/>
            <person name="Sasaki T."/>
            <person name="Nakazawa M."/>
            <person name="Kato Y."/>
            <person name="Yamadera T."/>
            <person name="Bae E."/>
            <person name="Toriyama S."/>
            <person name="Ikeda R."/>
            <person name="Zhang L."/>
            <person name="Fujitani K."/>
            <person name="Yoo E."/>
            <person name="Tsuchimochi K."/>
            <person name="Ohta T."/>
            <person name="Araya N."/>
            <person name="Fujita H."/>
            <person name="Aratani S."/>
            <person name="Eguchi K."/>
            <person name="Komiya S."/>
            <person name="Maruyama I."/>
            <person name="Higashi N."/>
            <person name="Sato M."/>
            <person name="Senoo H."/>
            <person name="Ochi T."/>
            <person name="Yokoyama S."/>
            <person name="Amano T."/>
            <person name="Kim J."/>
            <person name="Gay S."/>
            <person name="Fukamizu A."/>
            <person name="Nishioka K."/>
            <person name="Tanaka K."/>
            <person name="Nakajima T."/>
        </authorList>
    </citation>
    <scope>FUNCTION</scope>
    <scope>INTERACTION WITH P53</scope>
</reference>